<reference key="1">
    <citation type="journal article" date="2007" name="Genome Biol.">
        <title>Characterization and modeling of the Haemophilus influenzae core and supragenomes based on the complete genomic sequences of Rd and 12 clinical nontypeable strains.</title>
        <authorList>
            <person name="Hogg J.S."/>
            <person name="Hu F.Z."/>
            <person name="Janto B."/>
            <person name="Boissy R."/>
            <person name="Hayes J."/>
            <person name="Keefe R."/>
            <person name="Post J.C."/>
            <person name="Ehrlich G.D."/>
        </authorList>
    </citation>
    <scope>NUCLEOTIDE SEQUENCE [LARGE SCALE GENOMIC DNA]</scope>
    <source>
        <strain>PittEE</strain>
    </source>
</reference>
<proteinExistence type="inferred from homology"/>
<dbReference type="EC" id="2.5.1.-" evidence="1"/>
<dbReference type="EMBL" id="CP000671">
    <property type="protein sequence ID" value="ABQ98261.1"/>
    <property type="molecule type" value="Genomic_DNA"/>
</dbReference>
<dbReference type="SMR" id="A5UBW0"/>
<dbReference type="KEGG" id="hip:CGSHiEE_04280"/>
<dbReference type="HOGENOM" id="CLU_052665_0_0_6"/>
<dbReference type="GO" id="GO:0008168">
    <property type="term" value="F:methyltransferase activity"/>
    <property type="evidence" value="ECO:0007669"/>
    <property type="project" value="TreeGrafter"/>
</dbReference>
<dbReference type="GO" id="GO:0016765">
    <property type="term" value="F:transferase activity, transferring alkyl or aryl (other than methyl) groups"/>
    <property type="evidence" value="ECO:0007669"/>
    <property type="project" value="UniProtKB-UniRule"/>
</dbReference>
<dbReference type="GO" id="GO:0002098">
    <property type="term" value="P:tRNA wobble uridine modification"/>
    <property type="evidence" value="ECO:0007669"/>
    <property type="project" value="InterPro"/>
</dbReference>
<dbReference type="CDD" id="cd02440">
    <property type="entry name" value="AdoMet_MTases"/>
    <property type="match status" value="1"/>
</dbReference>
<dbReference type="Gene3D" id="3.40.50.150">
    <property type="entry name" value="Vaccinia Virus protein VP39"/>
    <property type="match status" value="1"/>
</dbReference>
<dbReference type="HAMAP" id="MF_01590">
    <property type="entry name" value="tRNA_carboxymethyltr_CmoB"/>
    <property type="match status" value="1"/>
</dbReference>
<dbReference type="InterPro" id="IPR010017">
    <property type="entry name" value="CmoB"/>
</dbReference>
<dbReference type="InterPro" id="IPR027555">
    <property type="entry name" value="Mo5U34_MeTrfas-like"/>
</dbReference>
<dbReference type="InterPro" id="IPR029063">
    <property type="entry name" value="SAM-dependent_MTases_sf"/>
</dbReference>
<dbReference type="NCBIfam" id="NF011650">
    <property type="entry name" value="PRK15068.1"/>
    <property type="match status" value="1"/>
</dbReference>
<dbReference type="NCBIfam" id="TIGR00452">
    <property type="entry name" value="tRNA 5-methoxyuridine(34)/uridine 5-oxyacetic acid(34) synthase CmoB"/>
    <property type="match status" value="1"/>
</dbReference>
<dbReference type="PANTHER" id="PTHR43464">
    <property type="entry name" value="METHYLTRANSFERASE"/>
    <property type="match status" value="1"/>
</dbReference>
<dbReference type="PANTHER" id="PTHR43464:SF95">
    <property type="entry name" value="TRNA U34 CARBOXYMETHYLTRANSFERASE"/>
    <property type="match status" value="1"/>
</dbReference>
<dbReference type="Pfam" id="PF08003">
    <property type="entry name" value="Methyltransf_9"/>
    <property type="match status" value="1"/>
</dbReference>
<dbReference type="SUPFAM" id="SSF53335">
    <property type="entry name" value="S-adenosyl-L-methionine-dependent methyltransferases"/>
    <property type="match status" value="1"/>
</dbReference>
<keyword id="KW-0808">Transferase</keyword>
<keyword id="KW-0819">tRNA processing</keyword>
<protein>
    <recommendedName>
        <fullName evidence="1">tRNA U34 carboxymethyltransferase</fullName>
        <ecNumber evidence="1">2.5.1.-</ecNumber>
    </recommendedName>
</protein>
<organism>
    <name type="scientific">Haemophilus influenzae (strain PittEE)</name>
    <dbReference type="NCBI Taxonomy" id="374930"/>
    <lineage>
        <taxon>Bacteria</taxon>
        <taxon>Pseudomonadati</taxon>
        <taxon>Pseudomonadota</taxon>
        <taxon>Gammaproteobacteria</taxon>
        <taxon>Pasteurellales</taxon>
        <taxon>Pasteurellaceae</taxon>
        <taxon>Haemophilus</taxon>
    </lineage>
</organism>
<gene>
    <name evidence="1" type="primary">cmoB</name>
    <name type="ordered locus">CGSHiEE_04280</name>
</gene>
<comment type="function">
    <text evidence="1">Catalyzes carboxymethyl transfer from carboxy-S-adenosyl-L-methionine (Cx-SAM) to 5-hydroxyuridine (ho5U) to form 5-carboxymethoxyuridine (cmo5U) at position 34 in tRNAs.</text>
</comment>
<comment type="catalytic activity">
    <reaction evidence="1">
        <text>carboxy-S-adenosyl-L-methionine + 5-hydroxyuridine(34) in tRNA = 5-carboxymethoxyuridine(34) in tRNA + S-adenosyl-L-homocysteine + H(+)</text>
        <dbReference type="Rhea" id="RHEA:52848"/>
        <dbReference type="Rhea" id="RHEA-COMP:13381"/>
        <dbReference type="Rhea" id="RHEA-COMP:13383"/>
        <dbReference type="ChEBI" id="CHEBI:15378"/>
        <dbReference type="ChEBI" id="CHEBI:57856"/>
        <dbReference type="ChEBI" id="CHEBI:134278"/>
        <dbReference type="ChEBI" id="CHEBI:136877"/>
        <dbReference type="ChEBI" id="CHEBI:136879"/>
    </reaction>
</comment>
<comment type="subunit">
    <text evidence="1">Homotetramer.</text>
</comment>
<comment type="similarity">
    <text evidence="1">Belongs to the class I-like SAM-binding methyltransferase superfamily. CmoB family.</text>
</comment>
<feature type="chain" id="PRO_0000313923" description="tRNA U34 carboxymethyltransferase">
    <location>
        <begin position="1"/>
        <end position="321"/>
    </location>
</feature>
<feature type="binding site" evidence="1">
    <location>
        <position position="90"/>
    </location>
    <ligand>
        <name>carboxy-S-adenosyl-L-methionine</name>
        <dbReference type="ChEBI" id="CHEBI:134278"/>
    </ligand>
</feature>
<feature type="binding site" evidence="1">
    <location>
        <position position="104"/>
    </location>
    <ligand>
        <name>carboxy-S-adenosyl-L-methionine</name>
        <dbReference type="ChEBI" id="CHEBI:134278"/>
    </ligand>
</feature>
<feature type="binding site" evidence="1">
    <location>
        <position position="109"/>
    </location>
    <ligand>
        <name>carboxy-S-adenosyl-L-methionine</name>
        <dbReference type="ChEBI" id="CHEBI:134278"/>
    </ligand>
</feature>
<feature type="binding site" evidence="1">
    <location>
        <position position="129"/>
    </location>
    <ligand>
        <name>carboxy-S-adenosyl-L-methionine</name>
        <dbReference type="ChEBI" id="CHEBI:134278"/>
    </ligand>
</feature>
<feature type="binding site" evidence="1">
    <location>
        <begin position="151"/>
        <end position="153"/>
    </location>
    <ligand>
        <name>carboxy-S-adenosyl-L-methionine</name>
        <dbReference type="ChEBI" id="CHEBI:134278"/>
    </ligand>
</feature>
<feature type="binding site" evidence="1">
    <location>
        <begin position="180"/>
        <end position="181"/>
    </location>
    <ligand>
        <name>carboxy-S-adenosyl-L-methionine</name>
        <dbReference type="ChEBI" id="CHEBI:134278"/>
    </ligand>
</feature>
<feature type="binding site" evidence="1">
    <location>
        <position position="195"/>
    </location>
    <ligand>
        <name>carboxy-S-adenosyl-L-methionine</name>
        <dbReference type="ChEBI" id="CHEBI:134278"/>
    </ligand>
</feature>
<feature type="binding site" evidence="1">
    <location>
        <position position="199"/>
    </location>
    <ligand>
        <name>carboxy-S-adenosyl-L-methionine</name>
        <dbReference type="ChEBI" id="CHEBI:134278"/>
    </ligand>
</feature>
<feature type="binding site" evidence="1">
    <location>
        <position position="314"/>
    </location>
    <ligand>
        <name>carboxy-S-adenosyl-L-methionine</name>
        <dbReference type="ChEBI" id="CHEBI:134278"/>
    </ligand>
</feature>
<sequence length="321" mass="36825">MIDFRPFYQQIATTNLSDWLETLPLQLKEWETQTHGDYAKWSKIVDFLSDLHADEIDLKSAVKSDRTSPLSEGEKQRIIHHLKQLMPWRKGPYHLFGIHVDCEWRSDFKWDRVLPHLSPLQGRTILDVGCGSGYHMWRMVGEGAKMVVGIDPTELFLCQFEAVRKLLNNDRRANLIPLGIEQMQPLAAFDTVFSMGVLYHRKSPLDHLSQLKNQLVKGGELVLETLVVDGDVNTVLIPADRYAKMKNVYFIPSVAALINWLEKVGFTNVRCVDVATTTLEEQRKTDWLENESLIDFLDPNDHSKTIEGYQAPKRAVILANK</sequence>
<name>CMOB_HAEIE</name>
<accession>A5UBW0</accession>
<evidence type="ECO:0000255" key="1">
    <source>
        <dbReference type="HAMAP-Rule" id="MF_01590"/>
    </source>
</evidence>